<protein>
    <recommendedName>
        <fullName evidence="1">UPF0102 protein Cpha266_0037</fullName>
    </recommendedName>
</protein>
<keyword id="KW-1185">Reference proteome</keyword>
<proteinExistence type="inferred from homology"/>
<name>Y037_CHLPD</name>
<accession>A1BCI0</accession>
<dbReference type="EMBL" id="CP000492">
    <property type="protein sequence ID" value="ABL64107.1"/>
    <property type="molecule type" value="Genomic_DNA"/>
</dbReference>
<dbReference type="RefSeq" id="WP_011743949.1">
    <property type="nucleotide sequence ID" value="NC_008639.1"/>
</dbReference>
<dbReference type="SMR" id="A1BCI0"/>
<dbReference type="STRING" id="290317.Cpha266_0037"/>
<dbReference type="KEGG" id="cph:Cpha266_0037"/>
<dbReference type="eggNOG" id="COG0792">
    <property type="taxonomic scope" value="Bacteria"/>
</dbReference>
<dbReference type="HOGENOM" id="CLU_115353_2_1_10"/>
<dbReference type="OrthoDB" id="9802516at2"/>
<dbReference type="Proteomes" id="UP000008701">
    <property type="component" value="Chromosome"/>
</dbReference>
<dbReference type="GO" id="GO:0003676">
    <property type="term" value="F:nucleic acid binding"/>
    <property type="evidence" value="ECO:0007669"/>
    <property type="project" value="InterPro"/>
</dbReference>
<dbReference type="CDD" id="cd20736">
    <property type="entry name" value="PoNe_Nuclease"/>
    <property type="match status" value="1"/>
</dbReference>
<dbReference type="Gene3D" id="3.40.1350.10">
    <property type="match status" value="1"/>
</dbReference>
<dbReference type="HAMAP" id="MF_00048">
    <property type="entry name" value="UPF0102"/>
    <property type="match status" value="1"/>
</dbReference>
<dbReference type="InterPro" id="IPR011335">
    <property type="entry name" value="Restrct_endonuc-II-like"/>
</dbReference>
<dbReference type="InterPro" id="IPR011856">
    <property type="entry name" value="tRNA_endonuc-like_dom_sf"/>
</dbReference>
<dbReference type="InterPro" id="IPR003509">
    <property type="entry name" value="UPF0102_YraN-like"/>
</dbReference>
<dbReference type="NCBIfam" id="NF009150">
    <property type="entry name" value="PRK12497.1-3"/>
    <property type="match status" value="1"/>
</dbReference>
<dbReference type="NCBIfam" id="NF009154">
    <property type="entry name" value="PRK12497.3-3"/>
    <property type="match status" value="1"/>
</dbReference>
<dbReference type="NCBIfam" id="TIGR00252">
    <property type="entry name" value="YraN family protein"/>
    <property type="match status" value="1"/>
</dbReference>
<dbReference type="PANTHER" id="PTHR34039">
    <property type="entry name" value="UPF0102 PROTEIN YRAN"/>
    <property type="match status" value="1"/>
</dbReference>
<dbReference type="PANTHER" id="PTHR34039:SF1">
    <property type="entry name" value="UPF0102 PROTEIN YRAN"/>
    <property type="match status" value="1"/>
</dbReference>
<dbReference type="Pfam" id="PF02021">
    <property type="entry name" value="UPF0102"/>
    <property type="match status" value="1"/>
</dbReference>
<dbReference type="SUPFAM" id="SSF52980">
    <property type="entry name" value="Restriction endonuclease-like"/>
    <property type="match status" value="1"/>
</dbReference>
<evidence type="ECO:0000255" key="1">
    <source>
        <dbReference type="HAMAP-Rule" id="MF_00048"/>
    </source>
</evidence>
<sequence>MSSDPHMLGIQGEQIAAAYLSRHGYRIIQRNYRYRRNEIDIIAKKHATICFIEVKTRASLEKGHPSEAVTPKKQKEIIKAAKSYLFSLGTDRCECRFDVIAILVRSMKQEEIGLYDLDHFTDAFQAE</sequence>
<comment type="similarity">
    <text evidence="1">Belongs to the UPF0102 family.</text>
</comment>
<reference key="1">
    <citation type="submission" date="2006-12" db="EMBL/GenBank/DDBJ databases">
        <title>Complete sequence of Chlorobium phaeobacteroides DSM 266.</title>
        <authorList>
            <consortium name="US DOE Joint Genome Institute"/>
            <person name="Copeland A."/>
            <person name="Lucas S."/>
            <person name="Lapidus A."/>
            <person name="Barry K."/>
            <person name="Detter J.C."/>
            <person name="Glavina del Rio T."/>
            <person name="Hammon N."/>
            <person name="Israni S."/>
            <person name="Pitluck S."/>
            <person name="Goltsman E."/>
            <person name="Schmutz J."/>
            <person name="Larimer F."/>
            <person name="Land M."/>
            <person name="Hauser L."/>
            <person name="Mikhailova N."/>
            <person name="Li T."/>
            <person name="Overmann J."/>
            <person name="Bryant D.A."/>
            <person name="Richardson P."/>
        </authorList>
    </citation>
    <scope>NUCLEOTIDE SEQUENCE [LARGE SCALE GENOMIC DNA]</scope>
    <source>
        <strain>DSM 266 / SMG 266 / 2430</strain>
    </source>
</reference>
<organism>
    <name type="scientific">Chlorobium phaeobacteroides (strain DSM 266 / SMG 266 / 2430)</name>
    <dbReference type="NCBI Taxonomy" id="290317"/>
    <lineage>
        <taxon>Bacteria</taxon>
        <taxon>Pseudomonadati</taxon>
        <taxon>Chlorobiota</taxon>
        <taxon>Chlorobiia</taxon>
        <taxon>Chlorobiales</taxon>
        <taxon>Chlorobiaceae</taxon>
        <taxon>Chlorobium/Pelodictyon group</taxon>
        <taxon>Chlorobium</taxon>
    </lineage>
</organism>
<feature type="chain" id="PRO_1000009199" description="UPF0102 protein Cpha266_0037">
    <location>
        <begin position="1"/>
        <end position="127"/>
    </location>
</feature>
<gene>
    <name type="ordered locus">Cpha266_0037</name>
</gene>